<name>PGSA_RICPR</name>
<sequence length="181" mass="20344">MRIDKNLPNYLTIARIMVIPVIILLFYINNSLARKLGALLFVLASITDFFDGYIARKYNLVTSFGKMFDPIADKLLVGCVTIMLLKKDNVDEIPCLLILAREFLVSGLREFLALVKVSVPVSRLAKLKTFLQMFALSILILGSKGSGIIYLDIVGEIILWIAAFLTIITGYSYFKACKTYF</sequence>
<feature type="chain" id="PRO_0000056783" description="CDP-diacylglycerol--glycerol-3-phosphate 3-phosphatidyltransferase">
    <location>
        <begin position="1"/>
        <end position="181"/>
    </location>
</feature>
<feature type="transmembrane region" description="Helical" evidence="2">
    <location>
        <begin position="8"/>
        <end position="28"/>
    </location>
</feature>
<feature type="transmembrane region" description="Helical" evidence="2">
    <location>
        <begin position="35"/>
        <end position="55"/>
    </location>
</feature>
<feature type="transmembrane region" description="Helical" evidence="2">
    <location>
        <begin position="64"/>
        <end position="84"/>
    </location>
</feature>
<feature type="transmembrane region" description="Helical" evidence="2">
    <location>
        <begin position="148"/>
        <end position="168"/>
    </location>
</feature>
<keyword id="KW-1003">Cell membrane</keyword>
<keyword id="KW-0444">Lipid biosynthesis</keyword>
<keyword id="KW-0443">Lipid metabolism</keyword>
<keyword id="KW-0472">Membrane</keyword>
<keyword id="KW-0594">Phospholipid biosynthesis</keyword>
<keyword id="KW-1208">Phospholipid metabolism</keyword>
<keyword id="KW-1185">Reference proteome</keyword>
<keyword id="KW-0808">Transferase</keyword>
<keyword id="KW-0812">Transmembrane</keyword>
<keyword id="KW-1133">Transmembrane helix</keyword>
<dbReference type="EC" id="2.7.8.5"/>
<dbReference type="EMBL" id="AJ235270">
    <property type="protein sequence ID" value="CAA14520.1"/>
    <property type="molecule type" value="Genomic_DNA"/>
</dbReference>
<dbReference type="PIR" id="A71713">
    <property type="entry name" value="A71713"/>
</dbReference>
<dbReference type="RefSeq" id="NP_220443.1">
    <property type="nucleotide sequence ID" value="NC_000963.1"/>
</dbReference>
<dbReference type="RefSeq" id="WP_004596626.1">
    <property type="nucleotide sequence ID" value="NC_000963.1"/>
</dbReference>
<dbReference type="SMR" id="Q9ZE96"/>
<dbReference type="STRING" id="272947.gene:17555132"/>
<dbReference type="EnsemblBacteria" id="CAA14520">
    <property type="protein sequence ID" value="CAA14520"/>
    <property type="gene ID" value="CAA14520"/>
</dbReference>
<dbReference type="GeneID" id="57569177"/>
<dbReference type="KEGG" id="rpr:RP049"/>
<dbReference type="PATRIC" id="fig|272947.5.peg.50"/>
<dbReference type="eggNOG" id="COG0558">
    <property type="taxonomic scope" value="Bacteria"/>
</dbReference>
<dbReference type="HOGENOM" id="CLU_051314_2_3_5"/>
<dbReference type="OrthoDB" id="9796672at2"/>
<dbReference type="UniPathway" id="UPA00084">
    <property type="reaction ID" value="UER00503"/>
</dbReference>
<dbReference type="Proteomes" id="UP000002480">
    <property type="component" value="Chromosome"/>
</dbReference>
<dbReference type="GO" id="GO:0005886">
    <property type="term" value="C:plasma membrane"/>
    <property type="evidence" value="ECO:0007669"/>
    <property type="project" value="UniProtKB-SubCell"/>
</dbReference>
<dbReference type="GO" id="GO:0008444">
    <property type="term" value="F:CDP-diacylglycerol-glycerol-3-phosphate 3-phosphatidyltransferase activity"/>
    <property type="evidence" value="ECO:0007669"/>
    <property type="project" value="UniProtKB-EC"/>
</dbReference>
<dbReference type="GO" id="GO:0006655">
    <property type="term" value="P:phosphatidylglycerol biosynthetic process"/>
    <property type="evidence" value="ECO:0007669"/>
    <property type="project" value="UniProtKB-UniPathway"/>
</dbReference>
<dbReference type="Gene3D" id="1.20.120.1760">
    <property type="match status" value="1"/>
</dbReference>
<dbReference type="InterPro" id="IPR050324">
    <property type="entry name" value="CDP-alcohol_PTase-I"/>
</dbReference>
<dbReference type="InterPro" id="IPR000462">
    <property type="entry name" value="CDP-OH_P_trans"/>
</dbReference>
<dbReference type="InterPro" id="IPR043130">
    <property type="entry name" value="CDP-OH_PTrfase_TM_dom"/>
</dbReference>
<dbReference type="InterPro" id="IPR048254">
    <property type="entry name" value="CDP_ALCOHOL_P_TRANSF_CS"/>
</dbReference>
<dbReference type="InterPro" id="IPR004570">
    <property type="entry name" value="Phosphatidylglycerol_P_synth"/>
</dbReference>
<dbReference type="NCBIfam" id="TIGR00560">
    <property type="entry name" value="pgsA"/>
    <property type="match status" value="1"/>
</dbReference>
<dbReference type="PANTHER" id="PTHR14269:SF62">
    <property type="entry name" value="CDP-DIACYLGLYCEROL--GLYCEROL-3-PHOSPHATE 3-PHOSPHATIDYLTRANSFERASE 1, CHLOROPLASTIC"/>
    <property type="match status" value="1"/>
</dbReference>
<dbReference type="PANTHER" id="PTHR14269">
    <property type="entry name" value="CDP-DIACYLGLYCEROL--GLYCEROL-3-PHOSPHATE 3-PHOSPHATIDYLTRANSFERASE-RELATED"/>
    <property type="match status" value="1"/>
</dbReference>
<dbReference type="Pfam" id="PF01066">
    <property type="entry name" value="CDP-OH_P_transf"/>
    <property type="match status" value="1"/>
</dbReference>
<dbReference type="PIRSF" id="PIRSF000847">
    <property type="entry name" value="Phos_ph_gly_syn"/>
    <property type="match status" value="1"/>
</dbReference>
<dbReference type="PROSITE" id="PS00379">
    <property type="entry name" value="CDP_ALCOHOL_P_TRANSF"/>
    <property type="match status" value="1"/>
</dbReference>
<comment type="function">
    <text evidence="1">This protein catalyzes the committed step to the synthesis of the acidic phospholipids.</text>
</comment>
<comment type="catalytic activity">
    <reaction>
        <text>a CDP-1,2-diacyl-sn-glycerol + sn-glycerol 3-phosphate = a 1,2-diacyl-sn-glycero-3-phospho-(1'-sn-glycero-3'-phosphate) + CMP + H(+)</text>
        <dbReference type="Rhea" id="RHEA:12593"/>
        <dbReference type="ChEBI" id="CHEBI:15378"/>
        <dbReference type="ChEBI" id="CHEBI:57597"/>
        <dbReference type="ChEBI" id="CHEBI:58332"/>
        <dbReference type="ChEBI" id="CHEBI:60110"/>
        <dbReference type="ChEBI" id="CHEBI:60377"/>
        <dbReference type="EC" id="2.7.8.5"/>
    </reaction>
</comment>
<comment type="pathway">
    <text>Phospholipid metabolism; phosphatidylglycerol biosynthesis; phosphatidylglycerol from CDP-diacylglycerol: step 1/2.</text>
</comment>
<comment type="subcellular location">
    <subcellularLocation>
        <location evidence="1">Cell membrane</location>
        <topology evidence="1">Multi-pass membrane protein</topology>
    </subcellularLocation>
</comment>
<comment type="similarity">
    <text evidence="3">Belongs to the CDP-alcohol phosphatidyltransferase class-I family.</text>
</comment>
<organism>
    <name type="scientific">Rickettsia prowazekii (strain Madrid E)</name>
    <dbReference type="NCBI Taxonomy" id="272947"/>
    <lineage>
        <taxon>Bacteria</taxon>
        <taxon>Pseudomonadati</taxon>
        <taxon>Pseudomonadota</taxon>
        <taxon>Alphaproteobacteria</taxon>
        <taxon>Rickettsiales</taxon>
        <taxon>Rickettsiaceae</taxon>
        <taxon>Rickettsieae</taxon>
        <taxon>Rickettsia</taxon>
        <taxon>typhus group</taxon>
    </lineage>
</organism>
<evidence type="ECO:0000250" key="1"/>
<evidence type="ECO:0000255" key="2"/>
<evidence type="ECO:0000305" key="3"/>
<proteinExistence type="inferred from homology"/>
<gene>
    <name type="primary">pgsA</name>
    <name type="ordered locus">RP049</name>
</gene>
<accession>Q9ZE96</accession>
<protein>
    <recommendedName>
        <fullName>CDP-diacylglycerol--glycerol-3-phosphate 3-phosphatidyltransferase</fullName>
        <ecNumber>2.7.8.5</ecNumber>
    </recommendedName>
    <alternativeName>
        <fullName>Phosphatidylglycerophosphate synthase</fullName>
        <shortName>PGP synthase</shortName>
    </alternativeName>
</protein>
<reference key="1">
    <citation type="journal article" date="1998" name="Nature">
        <title>The genome sequence of Rickettsia prowazekii and the origin of mitochondria.</title>
        <authorList>
            <person name="Andersson S.G.E."/>
            <person name="Zomorodipour A."/>
            <person name="Andersson J.O."/>
            <person name="Sicheritz-Ponten T."/>
            <person name="Alsmark U.C.M."/>
            <person name="Podowski R.M."/>
            <person name="Naeslund A.K."/>
            <person name="Eriksson A.-S."/>
            <person name="Winkler H.H."/>
            <person name="Kurland C.G."/>
        </authorList>
    </citation>
    <scope>NUCLEOTIDE SEQUENCE [LARGE SCALE GENOMIC DNA]</scope>
    <source>
        <strain>Madrid E</strain>
    </source>
</reference>